<reference key="1">
    <citation type="journal article" date="2001" name="J. Bacteriol.">
        <title>Genome sequence and comparative analysis of the solvent-producing bacterium Clostridium acetobutylicum.</title>
        <authorList>
            <person name="Noelling J."/>
            <person name="Breton G."/>
            <person name="Omelchenko M.V."/>
            <person name="Makarova K.S."/>
            <person name="Zeng Q."/>
            <person name="Gibson R."/>
            <person name="Lee H.M."/>
            <person name="Dubois J."/>
            <person name="Qiu D."/>
            <person name="Hitti J."/>
            <person name="Wolf Y.I."/>
            <person name="Tatusov R.L."/>
            <person name="Sabathe F."/>
            <person name="Doucette-Stamm L.A."/>
            <person name="Soucaille P."/>
            <person name="Daly M.J."/>
            <person name="Bennett G.N."/>
            <person name="Koonin E.V."/>
            <person name="Smith D.R."/>
        </authorList>
    </citation>
    <scope>NUCLEOTIDE SEQUENCE [LARGE SCALE GENOMIC DNA]</scope>
    <source>
        <strain>ATCC 824 / DSM 792 / JCM 1419 / IAM 19013 / LMG 5710 / NBRC 13948 / NRRL B-527 / VKM B-1787 / 2291 / W</strain>
    </source>
</reference>
<evidence type="ECO:0000255" key="1">
    <source>
        <dbReference type="HAMAP-Rule" id="MF_00412"/>
    </source>
</evidence>
<organism>
    <name type="scientific">Clostridium acetobutylicum (strain ATCC 824 / DSM 792 / JCM 1419 / IAM 19013 / LMG 5710 / NBRC 13948 / NRRL B-527 / VKM B-1787 / 2291 / W)</name>
    <dbReference type="NCBI Taxonomy" id="272562"/>
    <lineage>
        <taxon>Bacteria</taxon>
        <taxon>Bacillati</taxon>
        <taxon>Bacillota</taxon>
        <taxon>Clostridia</taxon>
        <taxon>Eubacteriales</taxon>
        <taxon>Clostridiaceae</taxon>
        <taxon>Clostridium</taxon>
    </lineage>
</organism>
<protein>
    <recommendedName>
        <fullName evidence="1">Gamma-glutamyl phosphate reductase</fullName>
        <shortName evidence="1">GPR</shortName>
        <ecNumber evidence="1">1.2.1.41</ecNumber>
    </recommendedName>
    <alternativeName>
        <fullName evidence="1">Glutamate-5-semialdehyde dehydrogenase</fullName>
    </alternativeName>
    <alternativeName>
        <fullName evidence="1">Glutamyl-gamma-semialdehyde dehydrogenase</fullName>
        <shortName evidence="1">GSA dehydrogenase</shortName>
    </alternativeName>
</protein>
<proteinExistence type="inferred from homology"/>
<feature type="chain" id="PRO_0000189714" description="Gamma-glutamyl phosphate reductase">
    <location>
        <begin position="1"/>
        <end position="418"/>
    </location>
</feature>
<dbReference type="EC" id="1.2.1.41" evidence="1"/>
<dbReference type="EMBL" id="AE001437">
    <property type="protein sequence ID" value="AAK81188.1"/>
    <property type="molecule type" value="Genomic_DNA"/>
</dbReference>
<dbReference type="PIR" id="A97300">
    <property type="entry name" value="A97300"/>
</dbReference>
<dbReference type="RefSeq" id="NP_349848.1">
    <property type="nucleotide sequence ID" value="NC_003030.1"/>
</dbReference>
<dbReference type="RefSeq" id="WP_010966528.1">
    <property type="nucleotide sequence ID" value="NC_003030.1"/>
</dbReference>
<dbReference type="SMR" id="Q97E62"/>
<dbReference type="STRING" id="272562.CA_C3254"/>
<dbReference type="KEGG" id="cac:CA_C3254"/>
<dbReference type="PATRIC" id="fig|272562.8.peg.3432"/>
<dbReference type="eggNOG" id="COG0014">
    <property type="taxonomic scope" value="Bacteria"/>
</dbReference>
<dbReference type="HOGENOM" id="CLU_030231_0_0_9"/>
<dbReference type="OrthoDB" id="9809970at2"/>
<dbReference type="UniPathway" id="UPA00098">
    <property type="reaction ID" value="UER00360"/>
</dbReference>
<dbReference type="Proteomes" id="UP000000814">
    <property type="component" value="Chromosome"/>
</dbReference>
<dbReference type="GO" id="GO:0005737">
    <property type="term" value="C:cytoplasm"/>
    <property type="evidence" value="ECO:0007669"/>
    <property type="project" value="UniProtKB-SubCell"/>
</dbReference>
<dbReference type="GO" id="GO:0004350">
    <property type="term" value="F:glutamate-5-semialdehyde dehydrogenase activity"/>
    <property type="evidence" value="ECO:0007669"/>
    <property type="project" value="UniProtKB-UniRule"/>
</dbReference>
<dbReference type="GO" id="GO:0050661">
    <property type="term" value="F:NADP binding"/>
    <property type="evidence" value="ECO:0007669"/>
    <property type="project" value="InterPro"/>
</dbReference>
<dbReference type="GO" id="GO:0055129">
    <property type="term" value="P:L-proline biosynthetic process"/>
    <property type="evidence" value="ECO:0007669"/>
    <property type="project" value="UniProtKB-UniRule"/>
</dbReference>
<dbReference type="CDD" id="cd07079">
    <property type="entry name" value="ALDH_F18-19_ProA-GPR"/>
    <property type="match status" value="1"/>
</dbReference>
<dbReference type="FunFam" id="3.40.309.10:FF:000006">
    <property type="entry name" value="Gamma-glutamyl phosphate reductase"/>
    <property type="match status" value="1"/>
</dbReference>
<dbReference type="Gene3D" id="3.40.605.10">
    <property type="entry name" value="Aldehyde Dehydrogenase, Chain A, domain 1"/>
    <property type="match status" value="1"/>
</dbReference>
<dbReference type="Gene3D" id="3.40.309.10">
    <property type="entry name" value="Aldehyde Dehydrogenase, Chain A, domain 2"/>
    <property type="match status" value="1"/>
</dbReference>
<dbReference type="HAMAP" id="MF_00412">
    <property type="entry name" value="ProA"/>
    <property type="match status" value="1"/>
</dbReference>
<dbReference type="InterPro" id="IPR016161">
    <property type="entry name" value="Ald_DH/histidinol_DH"/>
</dbReference>
<dbReference type="InterPro" id="IPR016163">
    <property type="entry name" value="Ald_DH_C"/>
</dbReference>
<dbReference type="InterPro" id="IPR016162">
    <property type="entry name" value="Ald_DH_N"/>
</dbReference>
<dbReference type="InterPro" id="IPR015590">
    <property type="entry name" value="Aldehyde_DH_dom"/>
</dbReference>
<dbReference type="InterPro" id="IPR020593">
    <property type="entry name" value="G-glutamylP_reductase_CS"/>
</dbReference>
<dbReference type="InterPro" id="IPR012134">
    <property type="entry name" value="Glu-5-SA_DH"/>
</dbReference>
<dbReference type="InterPro" id="IPR000965">
    <property type="entry name" value="GPR_dom"/>
</dbReference>
<dbReference type="NCBIfam" id="NF001221">
    <property type="entry name" value="PRK00197.1"/>
    <property type="match status" value="1"/>
</dbReference>
<dbReference type="NCBIfam" id="TIGR00407">
    <property type="entry name" value="proA"/>
    <property type="match status" value="1"/>
</dbReference>
<dbReference type="PANTHER" id="PTHR11063:SF8">
    <property type="entry name" value="DELTA-1-PYRROLINE-5-CARBOXYLATE SYNTHASE"/>
    <property type="match status" value="1"/>
</dbReference>
<dbReference type="PANTHER" id="PTHR11063">
    <property type="entry name" value="GLUTAMATE SEMIALDEHYDE DEHYDROGENASE"/>
    <property type="match status" value="1"/>
</dbReference>
<dbReference type="Pfam" id="PF00171">
    <property type="entry name" value="Aldedh"/>
    <property type="match status" value="2"/>
</dbReference>
<dbReference type="PIRSF" id="PIRSF000151">
    <property type="entry name" value="GPR"/>
    <property type="match status" value="1"/>
</dbReference>
<dbReference type="SUPFAM" id="SSF53720">
    <property type="entry name" value="ALDH-like"/>
    <property type="match status" value="1"/>
</dbReference>
<dbReference type="PROSITE" id="PS01223">
    <property type="entry name" value="PROA"/>
    <property type="match status" value="1"/>
</dbReference>
<keyword id="KW-0028">Amino-acid biosynthesis</keyword>
<keyword id="KW-0963">Cytoplasm</keyword>
<keyword id="KW-0521">NADP</keyword>
<keyword id="KW-0560">Oxidoreductase</keyword>
<keyword id="KW-0641">Proline biosynthesis</keyword>
<keyword id="KW-1185">Reference proteome</keyword>
<gene>
    <name evidence="1" type="primary">proA</name>
    <name type="ordered locus">CA_C3254</name>
</gene>
<accession>Q97E62</accession>
<name>PROA_CLOAB</name>
<sequence length="418" mass="45908">MDIKDYVINIAKNSKLAAKKLSYADTNTKNKALIEMSKALLENKDYILSQNKIDIENAEKIGTSKALIDRLTLNDKRITDMAEALIKTSSLQDPIGEVIKMWKTPDELQIGQMRVPLGVIGIIYEARPNVTVDAAALCIKSGNSVILRGGKEAINSNTAIAKIIKNAVVTAGLPDGSIEFIDITDRETVNVMMRLNGLIDVLIPRGGAGLIKSVVENSSVPVIETGTGNCHVYVDKYADFDKAERIIINAKLQRPAVCNAMESLLVHKDVAHEFLPRISSKLKELKVQIRGCAATQKIVKDIVPATDEDFGKEFLDLILSVKVVDSLEEAIDHIFKYSTKHSEAIITENYTNAQRFLKEVDAAAVYVNASTRFTDGEQFGFGGEIGISTQKLHARGPMGLEQLTTTKYVIYGDGQIRK</sequence>
<comment type="function">
    <text evidence="1">Catalyzes the NADPH-dependent reduction of L-glutamate 5-phosphate into L-glutamate 5-semialdehyde and phosphate. The product spontaneously undergoes cyclization to form 1-pyrroline-5-carboxylate.</text>
</comment>
<comment type="catalytic activity">
    <reaction evidence="1">
        <text>L-glutamate 5-semialdehyde + phosphate + NADP(+) = L-glutamyl 5-phosphate + NADPH + H(+)</text>
        <dbReference type="Rhea" id="RHEA:19541"/>
        <dbReference type="ChEBI" id="CHEBI:15378"/>
        <dbReference type="ChEBI" id="CHEBI:43474"/>
        <dbReference type="ChEBI" id="CHEBI:57783"/>
        <dbReference type="ChEBI" id="CHEBI:58066"/>
        <dbReference type="ChEBI" id="CHEBI:58274"/>
        <dbReference type="ChEBI" id="CHEBI:58349"/>
        <dbReference type="EC" id="1.2.1.41"/>
    </reaction>
</comment>
<comment type="pathway">
    <text evidence="1">Amino-acid biosynthesis; L-proline biosynthesis; L-glutamate 5-semialdehyde from L-glutamate: step 2/2.</text>
</comment>
<comment type="subcellular location">
    <subcellularLocation>
        <location evidence="1">Cytoplasm</location>
    </subcellularLocation>
</comment>
<comment type="similarity">
    <text evidence="1">Belongs to the gamma-glutamyl phosphate reductase family.</text>
</comment>